<dbReference type="EC" id="6.1.1.5" evidence="1"/>
<dbReference type="EMBL" id="BX950229">
    <property type="protein sequence ID" value="CAF31030.1"/>
    <property type="molecule type" value="Genomic_DNA"/>
</dbReference>
<dbReference type="RefSeq" id="WP_011171418.1">
    <property type="nucleotide sequence ID" value="NC_005791.1"/>
</dbReference>
<dbReference type="SMR" id="Q6LX78"/>
<dbReference type="STRING" id="267377.MMP1474"/>
<dbReference type="EnsemblBacteria" id="CAF31030">
    <property type="protein sequence ID" value="CAF31030"/>
    <property type="gene ID" value="MMP1474"/>
</dbReference>
<dbReference type="GeneID" id="2761573"/>
<dbReference type="KEGG" id="mmp:MMP1474"/>
<dbReference type="PATRIC" id="fig|267377.15.peg.1510"/>
<dbReference type="eggNOG" id="arCOG00807">
    <property type="taxonomic scope" value="Archaea"/>
</dbReference>
<dbReference type="HOGENOM" id="CLU_001493_1_1_2"/>
<dbReference type="OrthoDB" id="30823at2157"/>
<dbReference type="Proteomes" id="UP000000590">
    <property type="component" value="Chromosome"/>
</dbReference>
<dbReference type="GO" id="GO:0005737">
    <property type="term" value="C:cytoplasm"/>
    <property type="evidence" value="ECO:0007669"/>
    <property type="project" value="UniProtKB-SubCell"/>
</dbReference>
<dbReference type="GO" id="GO:0002161">
    <property type="term" value="F:aminoacyl-tRNA deacylase activity"/>
    <property type="evidence" value="ECO:0007669"/>
    <property type="project" value="InterPro"/>
</dbReference>
<dbReference type="GO" id="GO:0005524">
    <property type="term" value="F:ATP binding"/>
    <property type="evidence" value="ECO:0007669"/>
    <property type="project" value="UniProtKB-UniRule"/>
</dbReference>
<dbReference type="GO" id="GO:0004822">
    <property type="term" value="F:isoleucine-tRNA ligase activity"/>
    <property type="evidence" value="ECO:0007669"/>
    <property type="project" value="UniProtKB-UniRule"/>
</dbReference>
<dbReference type="GO" id="GO:0000049">
    <property type="term" value="F:tRNA binding"/>
    <property type="evidence" value="ECO:0007669"/>
    <property type="project" value="InterPro"/>
</dbReference>
<dbReference type="GO" id="GO:0008270">
    <property type="term" value="F:zinc ion binding"/>
    <property type="evidence" value="ECO:0007669"/>
    <property type="project" value="UniProtKB-UniRule"/>
</dbReference>
<dbReference type="GO" id="GO:0006428">
    <property type="term" value="P:isoleucyl-tRNA aminoacylation"/>
    <property type="evidence" value="ECO:0007669"/>
    <property type="project" value="UniProtKB-UniRule"/>
</dbReference>
<dbReference type="CDD" id="cd07961">
    <property type="entry name" value="Anticodon_Ia_Ile_ABEc"/>
    <property type="match status" value="1"/>
</dbReference>
<dbReference type="CDD" id="cd00818">
    <property type="entry name" value="IleRS_core"/>
    <property type="match status" value="1"/>
</dbReference>
<dbReference type="FunFam" id="3.40.50.620:FF:000286">
    <property type="entry name" value="Isoleucine--tRNA ligase"/>
    <property type="match status" value="1"/>
</dbReference>
<dbReference type="Gene3D" id="3.40.50.620">
    <property type="entry name" value="HUPs"/>
    <property type="match status" value="2"/>
</dbReference>
<dbReference type="Gene3D" id="1.10.730.10">
    <property type="entry name" value="Isoleucyl-tRNA Synthetase, Domain 1"/>
    <property type="match status" value="1"/>
</dbReference>
<dbReference type="HAMAP" id="MF_02003">
    <property type="entry name" value="Ile_tRNA_synth_type2"/>
    <property type="match status" value="1"/>
</dbReference>
<dbReference type="InterPro" id="IPR001412">
    <property type="entry name" value="aa-tRNA-synth_I_CS"/>
</dbReference>
<dbReference type="InterPro" id="IPR002300">
    <property type="entry name" value="aa-tRNA-synth_Ia"/>
</dbReference>
<dbReference type="InterPro" id="IPR033709">
    <property type="entry name" value="Anticodon_Ile_ABEc"/>
</dbReference>
<dbReference type="InterPro" id="IPR002301">
    <property type="entry name" value="Ile-tRNA-ligase"/>
</dbReference>
<dbReference type="InterPro" id="IPR023586">
    <property type="entry name" value="Ile-tRNA-ligase_type2"/>
</dbReference>
<dbReference type="InterPro" id="IPR013155">
    <property type="entry name" value="M/V/L/I-tRNA-synth_anticd-bd"/>
</dbReference>
<dbReference type="InterPro" id="IPR014729">
    <property type="entry name" value="Rossmann-like_a/b/a_fold"/>
</dbReference>
<dbReference type="InterPro" id="IPR009080">
    <property type="entry name" value="tRNAsynth_Ia_anticodon-bd"/>
</dbReference>
<dbReference type="InterPro" id="IPR009008">
    <property type="entry name" value="Val/Leu/Ile-tRNA-synth_edit"/>
</dbReference>
<dbReference type="NCBIfam" id="TIGR00392">
    <property type="entry name" value="ileS"/>
    <property type="match status" value="1"/>
</dbReference>
<dbReference type="PANTHER" id="PTHR42780:SF1">
    <property type="entry name" value="ISOLEUCINE--TRNA LIGASE, CYTOPLASMIC"/>
    <property type="match status" value="1"/>
</dbReference>
<dbReference type="PANTHER" id="PTHR42780">
    <property type="entry name" value="SOLEUCYL-TRNA SYNTHETASE"/>
    <property type="match status" value="1"/>
</dbReference>
<dbReference type="Pfam" id="PF08264">
    <property type="entry name" value="Anticodon_1"/>
    <property type="match status" value="1"/>
</dbReference>
<dbReference type="Pfam" id="PF19302">
    <property type="entry name" value="DUF5915"/>
    <property type="match status" value="1"/>
</dbReference>
<dbReference type="Pfam" id="PF00133">
    <property type="entry name" value="tRNA-synt_1"/>
    <property type="match status" value="1"/>
</dbReference>
<dbReference type="PRINTS" id="PR00984">
    <property type="entry name" value="TRNASYNTHILE"/>
</dbReference>
<dbReference type="SUPFAM" id="SSF47323">
    <property type="entry name" value="Anticodon-binding domain of a subclass of class I aminoacyl-tRNA synthetases"/>
    <property type="match status" value="1"/>
</dbReference>
<dbReference type="SUPFAM" id="SSF52374">
    <property type="entry name" value="Nucleotidylyl transferase"/>
    <property type="match status" value="1"/>
</dbReference>
<dbReference type="SUPFAM" id="SSF50677">
    <property type="entry name" value="ValRS/IleRS/LeuRS editing domain"/>
    <property type="match status" value="1"/>
</dbReference>
<dbReference type="PROSITE" id="PS00178">
    <property type="entry name" value="AA_TRNA_LIGASE_I"/>
    <property type="match status" value="1"/>
</dbReference>
<sequence>MKQVKSVNFRELDKKVKEYWKKENTYKKVKALNEHGPEYYFVDGPPYCSGAIHLGTAWNKIIKDTVLRFKRIQGYNVLDKAGWDMHGLPIEVKVENEFNIGSKKDIETKIGTQEFINKCKEFALNHLGHMQGQFENLGVWLDFENAYMPIKRDYMEMGWWTLKKAHEKELLTKDLRSGYWCPRCETSLAEHEVRGEYKEVLDPSVYVKFKLEKSDEYITIWTTTPWTLPSNMLVCVNPEFDYAYVNVEFENGTAETWIIAEKLVNDVMKKAEKNNDISKFSISKVVKGDSLIGLKYIHPLLEENEKQQEFAKIENVHTIVPGDHVTLEGGTGLVHTAPGFGEDDFNIGKEHNIPVYAPIDDNGKYTDSIWKGTFVKDMDESVIETLISKNLLVNSGKVKHTYPHCWRCKTPLLFRATEQWFLSISKIKDSIIEQGKTVDWVPDWVKTRYVNGVSFVGDWNISRQRYWGIPLPIWICEECGNYEVIGSVDELKERANEKDVDLSDIHKPAVDKITLTCSCGGKMKRTPDVLDVWYDSGLAPYASIGSKKLKKAQFITEGNDQVTKWFYSQHALSAVVFDDTSYEKCMMHGFTLDETGEKMSKSLGNIVSPDDVTEQYGADVLRFYLLSANKAWEDLRFSYSEMDETRSMLNTLWNSYAFSANYMVLDDFVPNNEYFKHVKDEDAWILSRINTVAKEAVEALEKPHLHVYTWALRDFILNDFSRWYIKLIRDRTWMEKNDVQKLSAYQTLYYVIMKLISIMAPVTPHLSEEIYQNLKTEDMPESIFMNKLTIESEFINETLEKDTEIIREIVDSILKGRDKAKYTLRYPITKITLPENIAETVEKYGYIIKEQGNVKEIELKEFEGNITVKPNFKELGKIFRSDVPKVVAAINSVAPNELKEKLKSGNFEVSEYEIKPEYVEFRVEIPENIVGVEFSKGNVYINIEMNDEVIKEGLVREVVRRIQSMRKDMDLDINEKINVKLEGIDFSSDYLSHIANEVRGNFVESLKSDYNQKWTIKTPNEETYDISIDIEKNK</sequence>
<gene>
    <name evidence="1" type="primary">ileS</name>
    <name type="ordered locus">MMP1474</name>
</gene>
<protein>
    <recommendedName>
        <fullName evidence="1">Isoleucine--tRNA ligase</fullName>
        <ecNumber evidence="1">6.1.1.5</ecNumber>
    </recommendedName>
    <alternativeName>
        <fullName evidence="1">Isoleucyl-tRNA synthetase</fullName>
        <shortName evidence="1">IleRS</shortName>
    </alternativeName>
</protein>
<feature type="chain" id="PRO_0000098581" description="Isoleucine--tRNA ligase">
    <location>
        <begin position="1"/>
        <end position="1034"/>
    </location>
</feature>
<feature type="short sequence motif" description="'HIGH' region">
    <location>
        <begin position="46"/>
        <end position="56"/>
    </location>
</feature>
<feature type="short sequence motif" description="'KMSKS' region">
    <location>
        <begin position="598"/>
        <end position="602"/>
    </location>
</feature>
<feature type="binding site" evidence="1">
    <location>
        <position position="601"/>
    </location>
    <ligand>
        <name>ATP</name>
        <dbReference type="ChEBI" id="CHEBI:30616"/>
    </ligand>
</feature>
<reference key="1">
    <citation type="journal article" date="2004" name="J. Bacteriol.">
        <title>Complete genome sequence of the genetically tractable hydrogenotrophic methanogen Methanococcus maripaludis.</title>
        <authorList>
            <person name="Hendrickson E.L."/>
            <person name="Kaul R."/>
            <person name="Zhou Y."/>
            <person name="Bovee D."/>
            <person name="Chapman P."/>
            <person name="Chung J."/>
            <person name="Conway de Macario E."/>
            <person name="Dodsworth J.A."/>
            <person name="Gillett W."/>
            <person name="Graham D.E."/>
            <person name="Hackett M."/>
            <person name="Haydock A.K."/>
            <person name="Kang A."/>
            <person name="Land M.L."/>
            <person name="Levy R."/>
            <person name="Lie T.J."/>
            <person name="Major T.A."/>
            <person name="Moore B.C."/>
            <person name="Porat I."/>
            <person name="Palmeiri A."/>
            <person name="Rouse G."/>
            <person name="Saenphimmachak C."/>
            <person name="Soell D."/>
            <person name="Van Dien S."/>
            <person name="Wang T."/>
            <person name="Whitman W.B."/>
            <person name="Xia Q."/>
            <person name="Zhang Y."/>
            <person name="Larimer F.W."/>
            <person name="Olson M.V."/>
            <person name="Leigh J.A."/>
        </authorList>
    </citation>
    <scope>NUCLEOTIDE SEQUENCE [LARGE SCALE GENOMIC DNA]</scope>
    <source>
        <strain>DSM 14266 / JCM 13030 / NBRC 101832 / S2 / LL</strain>
    </source>
</reference>
<name>SYI_METMP</name>
<organism>
    <name type="scientific">Methanococcus maripaludis (strain DSM 14266 / JCM 13030 / NBRC 101832 / S2 / LL)</name>
    <dbReference type="NCBI Taxonomy" id="267377"/>
    <lineage>
        <taxon>Archaea</taxon>
        <taxon>Methanobacteriati</taxon>
        <taxon>Methanobacteriota</taxon>
        <taxon>Methanomada group</taxon>
        <taxon>Methanococci</taxon>
        <taxon>Methanococcales</taxon>
        <taxon>Methanococcaceae</taxon>
        <taxon>Methanococcus</taxon>
    </lineage>
</organism>
<accession>Q6LX78</accession>
<proteinExistence type="inferred from homology"/>
<keyword id="KW-0030">Aminoacyl-tRNA synthetase</keyword>
<keyword id="KW-0067">ATP-binding</keyword>
<keyword id="KW-0963">Cytoplasm</keyword>
<keyword id="KW-0436">Ligase</keyword>
<keyword id="KW-0479">Metal-binding</keyword>
<keyword id="KW-0547">Nucleotide-binding</keyword>
<keyword id="KW-0648">Protein biosynthesis</keyword>
<keyword id="KW-1185">Reference proteome</keyword>
<keyword id="KW-0862">Zinc</keyword>
<evidence type="ECO:0000255" key="1">
    <source>
        <dbReference type="HAMAP-Rule" id="MF_02003"/>
    </source>
</evidence>
<comment type="function">
    <text evidence="1">Catalyzes the attachment of isoleucine to tRNA(Ile). As IleRS can inadvertently accommodate and process structurally similar amino acids such as valine, to avoid such errors it has two additional distinct tRNA(Ile)-dependent editing activities. One activity is designated as 'pretransfer' editing and involves the hydrolysis of activated Val-AMP. The other activity is designated 'posttransfer' editing and involves deacylation of mischarged Val-tRNA(Ile).</text>
</comment>
<comment type="catalytic activity">
    <reaction evidence="1">
        <text>tRNA(Ile) + L-isoleucine + ATP = L-isoleucyl-tRNA(Ile) + AMP + diphosphate</text>
        <dbReference type="Rhea" id="RHEA:11060"/>
        <dbReference type="Rhea" id="RHEA-COMP:9666"/>
        <dbReference type="Rhea" id="RHEA-COMP:9695"/>
        <dbReference type="ChEBI" id="CHEBI:30616"/>
        <dbReference type="ChEBI" id="CHEBI:33019"/>
        <dbReference type="ChEBI" id="CHEBI:58045"/>
        <dbReference type="ChEBI" id="CHEBI:78442"/>
        <dbReference type="ChEBI" id="CHEBI:78528"/>
        <dbReference type="ChEBI" id="CHEBI:456215"/>
        <dbReference type="EC" id="6.1.1.5"/>
    </reaction>
</comment>
<comment type="cofactor">
    <cofactor evidence="1">
        <name>Zn(2+)</name>
        <dbReference type="ChEBI" id="CHEBI:29105"/>
    </cofactor>
</comment>
<comment type="subunit">
    <text evidence="1">Monomer.</text>
</comment>
<comment type="subcellular location">
    <subcellularLocation>
        <location evidence="1">Cytoplasm</location>
    </subcellularLocation>
</comment>
<comment type="domain">
    <text evidence="1">IleRS has two distinct active sites: one for aminoacylation and one for editing. The misactivated valine is translocated from the active site to the editing site, which sterically excludes the correctly activated isoleucine. The single editing site contains two valyl binding pockets, one specific for each substrate (Val-AMP or Val-tRNA(Ile)).</text>
</comment>
<comment type="similarity">
    <text evidence="1">Belongs to the class-I aminoacyl-tRNA synthetase family. IleS type 2 subfamily.</text>
</comment>